<keyword id="KW-0067">ATP-binding</keyword>
<keyword id="KW-0143">Chaperone</keyword>
<keyword id="KW-0963">Cytoplasm</keyword>
<keyword id="KW-0413">Isomerase</keyword>
<keyword id="KW-0547">Nucleotide-binding</keyword>
<keyword id="KW-1185">Reference proteome</keyword>
<feature type="chain" id="PRO_1000212193" description="Chaperonin GroEL">
    <location>
        <begin position="1"/>
        <end position="549"/>
    </location>
</feature>
<feature type="region of interest" description="Disordered" evidence="2">
    <location>
        <begin position="522"/>
        <end position="549"/>
    </location>
</feature>
<feature type="compositionally biased region" description="Gly residues" evidence="2">
    <location>
        <begin position="532"/>
        <end position="549"/>
    </location>
</feature>
<feature type="binding site" evidence="1">
    <location>
        <begin position="29"/>
        <end position="32"/>
    </location>
    <ligand>
        <name>ATP</name>
        <dbReference type="ChEBI" id="CHEBI:30616"/>
    </ligand>
</feature>
<feature type="binding site" evidence="1">
    <location>
        <position position="50"/>
    </location>
    <ligand>
        <name>ATP</name>
        <dbReference type="ChEBI" id="CHEBI:30616"/>
    </ligand>
</feature>
<feature type="binding site" evidence="1">
    <location>
        <begin position="86"/>
        <end position="90"/>
    </location>
    <ligand>
        <name>ATP</name>
        <dbReference type="ChEBI" id="CHEBI:30616"/>
    </ligand>
</feature>
<feature type="binding site" evidence="1">
    <location>
        <position position="413"/>
    </location>
    <ligand>
        <name>ATP</name>
        <dbReference type="ChEBI" id="CHEBI:30616"/>
    </ligand>
</feature>
<feature type="binding site" evidence="1">
    <location>
        <begin position="479"/>
        <end position="481"/>
    </location>
    <ligand>
        <name>ATP</name>
        <dbReference type="ChEBI" id="CHEBI:30616"/>
    </ligand>
</feature>
<feature type="binding site" evidence="1">
    <location>
        <position position="496"/>
    </location>
    <ligand>
        <name>ATP</name>
        <dbReference type="ChEBI" id="CHEBI:30616"/>
    </ligand>
</feature>
<reference key="1">
    <citation type="journal article" date="2009" name="PLoS Genet.">
        <title>Alliance of proteomics and genomics to unravel the specificities of Sahara bacterium Deinococcus deserti.</title>
        <authorList>
            <person name="de Groot A."/>
            <person name="Dulermo R."/>
            <person name="Ortet P."/>
            <person name="Blanchard L."/>
            <person name="Guerin P."/>
            <person name="Fernandez B."/>
            <person name="Vacherie B."/>
            <person name="Dossat C."/>
            <person name="Jolivet E."/>
            <person name="Siguier P."/>
            <person name="Chandler M."/>
            <person name="Barakat M."/>
            <person name="Dedieu A."/>
            <person name="Barbe V."/>
            <person name="Heulin T."/>
            <person name="Sommer S."/>
            <person name="Achouak W."/>
            <person name="Armengaud J."/>
        </authorList>
    </citation>
    <scope>NUCLEOTIDE SEQUENCE [LARGE SCALE GENOMIC DNA]</scope>
    <source>
        <strain>DSM 17065 / CIP 109153 / LMG 22923 / VCD115</strain>
    </source>
</reference>
<comment type="function">
    <text evidence="1">Together with its co-chaperonin GroES, plays an essential role in assisting protein folding. The GroEL-GroES system forms a nano-cage that allows encapsulation of the non-native substrate proteins and provides a physical environment optimized to promote and accelerate protein folding.</text>
</comment>
<comment type="catalytic activity">
    <reaction evidence="1">
        <text>ATP + H2O + a folded polypeptide = ADP + phosphate + an unfolded polypeptide.</text>
        <dbReference type="EC" id="5.6.1.7"/>
    </reaction>
</comment>
<comment type="subunit">
    <text evidence="1">Forms a cylinder of 14 subunits composed of two heptameric rings stacked back-to-back. Interacts with the co-chaperonin GroES.</text>
</comment>
<comment type="subcellular location">
    <subcellularLocation>
        <location evidence="1">Cytoplasm</location>
    </subcellularLocation>
</comment>
<comment type="similarity">
    <text evidence="1">Belongs to the chaperonin (HSP60) family.</text>
</comment>
<protein>
    <recommendedName>
        <fullName evidence="1">Chaperonin GroEL</fullName>
        <ecNumber evidence="1">5.6.1.7</ecNumber>
    </recommendedName>
    <alternativeName>
        <fullName evidence="1">60 kDa chaperonin</fullName>
    </alternativeName>
    <alternativeName>
        <fullName evidence="1">Chaperonin-60</fullName>
        <shortName evidence="1">Cpn60</shortName>
    </alternativeName>
</protein>
<name>CH60_DEIDV</name>
<dbReference type="EC" id="5.6.1.7" evidence="1"/>
<dbReference type="EMBL" id="CP001114">
    <property type="protein sequence ID" value="ACO47289.1"/>
    <property type="molecule type" value="Genomic_DNA"/>
</dbReference>
<dbReference type="RefSeq" id="WP_012694410.1">
    <property type="nucleotide sequence ID" value="NC_012526.1"/>
</dbReference>
<dbReference type="SMR" id="C1CZP1"/>
<dbReference type="STRING" id="546414.Deide_22590"/>
<dbReference type="PaxDb" id="546414-Deide_22590"/>
<dbReference type="KEGG" id="ddr:Deide_22590"/>
<dbReference type="eggNOG" id="COG0459">
    <property type="taxonomic scope" value="Bacteria"/>
</dbReference>
<dbReference type="HOGENOM" id="CLU_016503_3_0_0"/>
<dbReference type="OrthoDB" id="9766614at2"/>
<dbReference type="Proteomes" id="UP000002208">
    <property type="component" value="Chromosome"/>
</dbReference>
<dbReference type="GO" id="GO:0005737">
    <property type="term" value="C:cytoplasm"/>
    <property type="evidence" value="ECO:0007669"/>
    <property type="project" value="UniProtKB-SubCell"/>
</dbReference>
<dbReference type="GO" id="GO:0005524">
    <property type="term" value="F:ATP binding"/>
    <property type="evidence" value="ECO:0007669"/>
    <property type="project" value="UniProtKB-UniRule"/>
</dbReference>
<dbReference type="GO" id="GO:0140662">
    <property type="term" value="F:ATP-dependent protein folding chaperone"/>
    <property type="evidence" value="ECO:0007669"/>
    <property type="project" value="InterPro"/>
</dbReference>
<dbReference type="GO" id="GO:0016853">
    <property type="term" value="F:isomerase activity"/>
    <property type="evidence" value="ECO:0007669"/>
    <property type="project" value="UniProtKB-KW"/>
</dbReference>
<dbReference type="GO" id="GO:0051082">
    <property type="term" value="F:unfolded protein binding"/>
    <property type="evidence" value="ECO:0007669"/>
    <property type="project" value="UniProtKB-UniRule"/>
</dbReference>
<dbReference type="GO" id="GO:0042026">
    <property type="term" value="P:protein refolding"/>
    <property type="evidence" value="ECO:0007669"/>
    <property type="project" value="UniProtKB-UniRule"/>
</dbReference>
<dbReference type="CDD" id="cd03344">
    <property type="entry name" value="GroEL"/>
    <property type="match status" value="1"/>
</dbReference>
<dbReference type="FunFam" id="3.50.7.10:FF:000001">
    <property type="entry name" value="60 kDa chaperonin"/>
    <property type="match status" value="1"/>
</dbReference>
<dbReference type="Gene3D" id="3.50.7.10">
    <property type="entry name" value="GroEL"/>
    <property type="match status" value="1"/>
</dbReference>
<dbReference type="Gene3D" id="1.10.560.10">
    <property type="entry name" value="GroEL-like equatorial domain"/>
    <property type="match status" value="1"/>
</dbReference>
<dbReference type="Gene3D" id="3.30.260.10">
    <property type="entry name" value="TCP-1-like chaperonin intermediate domain"/>
    <property type="match status" value="1"/>
</dbReference>
<dbReference type="HAMAP" id="MF_00600">
    <property type="entry name" value="CH60"/>
    <property type="match status" value="1"/>
</dbReference>
<dbReference type="InterPro" id="IPR001844">
    <property type="entry name" value="Cpn60/GroEL"/>
</dbReference>
<dbReference type="InterPro" id="IPR002423">
    <property type="entry name" value="Cpn60/GroEL/TCP-1"/>
</dbReference>
<dbReference type="InterPro" id="IPR027409">
    <property type="entry name" value="GroEL-like_apical_dom_sf"/>
</dbReference>
<dbReference type="InterPro" id="IPR027413">
    <property type="entry name" value="GROEL-like_equatorial_sf"/>
</dbReference>
<dbReference type="InterPro" id="IPR027410">
    <property type="entry name" value="TCP-1-like_intermed_sf"/>
</dbReference>
<dbReference type="NCBIfam" id="TIGR02348">
    <property type="entry name" value="GroEL"/>
    <property type="match status" value="1"/>
</dbReference>
<dbReference type="NCBIfam" id="NF000592">
    <property type="entry name" value="PRK00013.1"/>
    <property type="match status" value="1"/>
</dbReference>
<dbReference type="NCBIfam" id="NF009487">
    <property type="entry name" value="PRK12849.1"/>
    <property type="match status" value="1"/>
</dbReference>
<dbReference type="NCBIfam" id="NF009488">
    <property type="entry name" value="PRK12850.1"/>
    <property type="match status" value="1"/>
</dbReference>
<dbReference type="NCBIfam" id="NF009489">
    <property type="entry name" value="PRK12851.1"/>
    <property type="match status" value="1"/>
</dbReference>
<dbReference type="PANTHER" id="PTHR45633">
    <property type="entry name" value="60 KDA HEAT SHOCK PROTEIN, MITOCHONDRIAL"/>
    <property type="match status" value="1"/>
</dbReference>
<dbReference type="Pfam" id="PF00118">
    <property type="entry name" value="Cpn60_TCP1"/>
    <property type="match status" value="1"/>
</dbReference>
<dbReference type="PRINTS" id="PR00298">
    <property type="entry name" value="CHAPERONIN60"/>
</dbReference>
<dbReference type="SUPFAM" id="SSF52029">
    <property type="entry name" value="GroEL apical domain-like"/>
    <property type="match status" value="1"/>
</dbReference>
<dbReference type="SUPFAM" id="SSF48592">
    <property type="entry name" value="GroEL equatorial domain-like"/>
    <property type="match status" value="1"/>
</dbReference>
<dbReference type="SUPFAM" id="SSF54849">
    <property type="entry name" value="GroEL-intermediate domain like"/>
    <property type="match status" value="1"/>
</dbReference>
<evidence type="ECO:0000255" key="1">
    <source>
        <dbReference type="HAMAP-Rule" id="MF_00600"/>
    </source>
</evidence>
<evidence type="ECO:0000256" key="2">
    <source>
        <dbReference type="SAM" id="MobiDB-lite"/>
    </source>
</evidence>
<gene>
    <name evidence="1" type="primary">groEL</name>
    <name evidence="1" type="synonym">groL</name>
    <name type="ordered locus">Deide_22590</name>
</gene>
<sequence>MAKQLVFDEAARRSLERGVNAVANAVKVTLGPRGRNVVIEKKFGSPTITKDGVTVAKEVELEDKLENIGAQLLKEVASKTNDITGDGTTTATVLGQAIVKEGLRNVAAGANPLALKRGIEKAVAAAIVEIQNLAVPVEDSDAIKKVAGISANDDQVGEEIASAMDKVGKEGVITIEESKGFDTEVDVVEGMQFDKGFINPYFVTNPEKMEAVLEDAYILINEKKISNLKDLLPVLEKVAQTGRPLLIIAEDVEGEALATLVVNKLRGTLNIAAVKAPGFGDRRKEMLRDIAAVTGGEVVSEDLGHKLENTGMEMLGRAARIRITKDETTIVDGKGEQAQIDARVNAIKGELDTTDSDYAREKLQERLAKLSGGVAVIRVGAATETELKEKKHRYEDALSTARSAVEEGIVAGGGTTLLRIIPAVRKAAEGLQGDEATGARILIRALEEPARQIAVNAGEEGSVIVNAVINSDKPRYGFNAATGEYVDDMVAAGIVDPAKVTRTALQNAASIGALILTTEAIVSDKPEKPQQGGQGGGGMGGGDMGGMDF</sequence>
<organism>
    <name type="scientific">Deinococcus deserti (strain DSM 17065 / CIP 109153 / LMG 22923 / VCD115)</name>
    <dbReference type="NCBI Taxonomy" id="546414"/>
    <lineage>
        <taxon>Bacteria</taxon>
        <taxon>Thermotogati</taxon>
        <taxon>Deinococcota</taxon>
        <taxon>Deinococci</taxon>
        <taxon>Deinococcales</taxon>
        <taxon>Deinococcaceae</taxon>
        <taxon>Deinococcus</taxon>
    </lineage>
</organism>
<accession>C1CZP1</accession>
<proteinExistence type="inferred from homology"/>